<gene>
    <name evidence="1" type="primary">garL</name>
    <name type="ordered locus">ECIAI1_3274</name>
</gene>
<protein>
    <recommendedName>
        <fullName evidence="1">5-keto-4-deoxy-D-glucarate aldolase</fullName>
        <shortName evidence="1">KDGluc aldolase</shortName>
        <shortName evidence="1">KDGlucA</shortName>
        <ecNumber evidence="1">4.1.2.20</ecNumber>
    </recommendedName>
    <alternativeName>
        <fullName evidence="1">2-dehydro-3-deoxy-D-glucarate aldolase</fullName>
    </alternativeName>
    <alternativeName>
        <fullName evidence="1">2-keto-3-deoxy-D-glucarate aldolase</fullName>
    </alternativeName>
    <alternativeName>
        <fullName evidence="1">5-dehydro-4-deoxy-D-glucarate aldolase</fullName>
    </alternativeName>
    <alternativeName>
        <fullName evidence="1">Alpha-keto-beta-deoxy-D-glucarate aldolase</fullName>
    </alternativeName>
</protein>
<dbReference type="EC" id="4.1.2.20" evidence="1"/>
<dbReference type="EMBL" id="CU928160">
    <property type="protein sequence ID" value="CAR00088.1"/>
    <property type="molecule type" value="Genomic_DNA"/>
</dbReference>
<dbReference type="RefSeq" id="WP_001058227.1">
    <property type="nucleotide sequence ID" value="NC_011741.1"/>
</dbReference>
<dbReference type="SMR" id="B7M032"/>
<dbReference type="GeneID" id="93778860"/>
<dbReference type="KEGG" id="ecr:ECIAI1_3274"/>
<dbReference type="HOGENOM" id="CLU_059964_1_0_6"/>
<dbReference type="UniPathway" id="UPA00565">
    <property type="reaction ID" value="UER00630"/>
</dbReference>
<dbReference type="GO" id="GO:0005737">
    <property type="term" value="C:cytoplasm"/>
    <property type="evidence" value="ECO:0007669"/>
    <property type="project" value="TreeGrafter"/>
</dbReference>
<dbReference type="GO" id="GO:0008672">
    <property type="term" value="F:2-dehydro-3-deoxyglucarate aldolase activity"/>
    <property type="evidence" value="ECO:0007669"/>
    <property type="project" value="UniProtKB-UniRule"/>
</dbReference>
<dbReference type="GO" id="GO:0000287">
    <property type="term" value="F:magnesium ion binding"/>
    <property type="evidence" value="ECO:0007669"/>
    <property type="project" value="UniProtKB-UniRule"/>
</dbReference>
<dbReference type="GO" id="GO:0042838">
    <property type="term" value="P:D-glucarate catabolic process"/>
    <property type="evidence" value="ECO:0007669"/>
    <property type="project" value="UniProtKB-UniRule"/>
</dbReference>
<dbReference type="GO" id="GO:0046392">
    <property type="term" value="P:galactarate catabolic process"/>
    <property type="evidence" value="ECO:0007669"/>
    <property type="project" value="UniProtKB-UniRule"/>
</dbReference>
<dbReference type="FunFam" id="3.20.20.60:FF:000004">
    <property type="entry name" value="5-keto-4-deoxy-D-glucarate aldolase"/>
    <property type="match status" value="1"/>
</dbReference>
<dbReference type="Gene3D" id="3.20.20.60">
    <property type="entry name" value="Phosphoenolpyruvate-binding domains"/>
    <property type="match status" value="1"/>
</dbReference>
<dbReference type="HAMAP" id="MF_01291">
    <property type="entry name" value="KDGluc_aldolase"/>
    <property type="match status" value="1"/>
</dbReference>
<dbReference type="InterPro" id="IPR005000">
    <property type="entry name" value="Aldolase/citrate-lyase_domain"/>
</dbReference>
<dbReference type="InterPro" id="IPR017648">
    <property type="entry name" value="GarL"/>
</dbReference>
<dbReference type="InterPro" id="IPR050251">
    <property type="entry name" value="HpcH-HpaI_aldolase"/>
</dbReference>
<dbReference type="InterPro" id="IPR015813">
    <property type="entry name" value="Pyrv/PenolPyrv_kinase-like_dom"/>
</dbReference>
<dbReference type="InterPro" id="IPR040442">
    <property type="entry name" value="Pyrv_kinase-like_dom_sf"/>
</dbReference>
<dbReference type="NCBIfam" id="TIGR03239">
    <property type="entry name" value="GarL"/>
    <property type="match status" value="1"/>
</dbReference>
<dbReference type="NCBIfam" id="NF007849">
    <property type="entry name" value="PRK10558.1"/>
    <property type="match status" value="1"/>
</dbReference>
<dbReference type="PANTHER" id="PTHR30502">
    <property type="entry name" value="2-KETO-3-DEOXY-L-RHAMNONATE ALDOLASE"/>
    <property type="match status" value="1"/>
</dbReference>
<dbReference type="PANTHER" id="PTHR30502:SF4">
    <property type="entry name" value="5-KETO-4-DEOXY-D-GLUCARATE ALDOLASE"/>
    <property type="match status" value="1"/>
</dbReference>
<dbReference type="Pfam" id="PF03328">
    <property type="entry name" value="HpcH_HpaI"/>
    <property type="match status" value="1"/>
</dbReference>
<dbReference type="SUPFAM" id="SSF51621">
    <property type="entry name" value="Phosphoenolpyruvate/pyruvate domain"/>
    <property type="match status" value="1"/>
</dbReference>
<organism>
    <name type="scientific">Escherichia coli O8 (strain IAI1)</name>
    <dbReference type="NCBI Taxonomy" id="585034"/>
    <lineage>
        <taxon>Bacteria</taxon>
        <taxon>Pseudomonadati</taxon>
        <taxon>Pseudomonadota</taxon>
        <taxon>Gammaproteobacteria</taxon>
        <taxon>Enterobacterales</taxon>
        <taxon>Enterobacteriaceae</taxon>
        <taxon>Escherichia</taxon>
    </lineage>
</organism>
<keyword id="KW-0456">Lyase</keyword>
<keyword id="KW-0460">Magnesium</keyword>
<keyword id="KW-0479">Metal-binding</keyword>
<sequence length="256" mass="27399">MNNDVFPNKFKAALAAKQVQIGCWSALSNPISTEVLGLAGFDWLVLDGEHAPNDISTFIPQLMALKGSASAPVVRVPTNEPVIIKRLLDIGFYNFLIPFVETKEEAEQAVASTRYPPEGIRGVSVSHRANMFGTVADYFAQSNKNITILVQIESQQGVDNVDAIAATEGVDGIFVGPSDLAAALGHLGNASHPDVQKAIQHIFNRASAHGKPSGILAPVEADARRYLEWGATFVAVGSDLGVFRSATQKLADTFKK</sequence>
<feature type="chain" id="PRO_1000140407" description="5-keto-4-deoxy-D-glucarate aldolase">
    <location>
        <begin position="1"/>
        <end position="256"/>
    </location>
</feature>
<feature type="active site" description="Proton acceptor" evidence="1">
    <location>
        <position position="50"/>
    </location>
</feature>
<feature type="binding site" evidence="1">
    <location>
        <position position="151"/>
    </location>
    <ligand>
        <name>substrate</name>
    </ligand>
</feature>
<feature type="binding site" evidence="1">
    <location>
        <position position="153"/>
    </location>
    <ligand>
        <name>Mg(2+)</name>
        <dbReference type="ChEBI" id="CHEBI:18420"/>
    </ligand>
</feature>
<feature type="binding site" evidence="1">
    <location>
        <position position="178"/>
    </location>
    <ligand>
        <name>substrate</name>
    </ligand>
</feature>
<feature type="binding site" evidence="1">
    <location>
        <position position="179"/>
    </location>
    <ligand>
        <name>Mg(2+)</name>
        <dbReference type="ChEBI" id="CHEBI:18420"/>
    </ligand>
</feature>
<feature type="binding site" evidence="1">
    <location>
        <position position="179"/>
    </location>
    <ligand>
        <name>substrate</name>
    </ligand>
</feature>
<feature type="site" description="Transition state stabilizer" evidence="1">
    <location>
        <position position="75"/>
    </location>
</feature>
<feature type="site" description="Increases basicity of active site His" evidence="1">
    <location>
        <position position="89"/>
    </location>
</feature>
<name>GARL_ECO8A</name>
<reference key="1">
    <citation type="journal article" date="2009" name="PLoS Genet.">
        <title>Organised genome dynamics in the Escherichia coli species results in highly diverse adaptive paths.</title>
        <authorList>
            <person name="Touchon M."/>
            <person name="Hoede C."/>
            <person name="Tenaillon O."/>
            <person name="Barbe V."/>
            <person name="Baeriswyl S."/>
            <person name="Bidet P."/>
            <person name="Bingen E."/>
            <person name="Bonacorsi S."/>
            <person name="Bouchier C."/>
            <person name="Bouvet O."/>
            <person name="Calteau A."/>
            <person name="Chiapello H."/>
            <person name="Clermont O."/>
            <person name="Cruveiller S."/>
            <person name="Danchin A."/>
            <person name="Diard M."/>
            <person name="Dossat C."/>
            <person name="Karoui M.E."/>
            <person name="Frapy E."/>
            <person name="Garry L."/>
            <person name="Ghigo J.M."/>
            <person name="Gilles A.M."/>
            <person name="Johnson J."/>
            <person name="Le Bouguenec C."/>
            <person name="Lescat M."/>
            <person name="Mangenot S."/>
            <person name="Martinez-Jehanne V."/>
            <person name="Matic I."/>
            <person name="Nassif X."/>
            <person name="Oztas S."/>
            <person name="Petit M.A."/>
            <person name="Pichon C."/>
            <person name="Rouy Z."/>
            <person name="Ruf C.S."/>
            <person name="Schneider D."/>
            <person name="Tourret J."/>
            <person name="Vacherie B."/>
            <person name="Vallenet D."/>
            <person name="Medigue C."/>
            <person name="Rocha E.P.C."/>
            <person name="Denamur E."/>
        </authorList>
    </citation>
    <scope>NUCLEOTIDE SEQUENCE [LARGE SCALE GENOMIC DNA]</scope>
    <source>
        <strain>IAI1</strain>
    </source>
</reference>
<evidence type="ECO:0000255" key="1">
    <source>
        <dbReference type="HAMAP-Rule" id="MF_01291"/>
    </source>
</evidence>
<comment type="function">
    <text evidence="1">Catalyzes the reversible retro-aldol cleavage of both 5-keto-4-deoxy-D-glucarate and 2-keto-3-deoxy-D-glucarate to pyruvate and tartronic semialdehyde.</text>
</comment>
<comment type="catalytic activity">
    <reaction evidence="1">
        <text>5-dehydro-4-deoxy-D-glucarate = 2-hydroxy-3-oxopropanoate + pyruvate</text>
        <dbReference type="Rhea" id="RHEA:27726"/>
        <dbReference type="ChEBI" id="CHEBI:15361"/>
        <dbReference type="ChEBI" id="CHEBI:42819"/>
        <dbReference type="ChEBI" id="CHEBI:57978"/>
    </reaction>
</comment>
<comment type="catalytic activity">
    <reaction evidence="1">
        <text>2-dehydro-3-deoxy-D-glucarate = 2-hydroxy-3-oxopropanoate + pyruvate</text>
        <dbReference type="Rhea" id="RHEA:10268"/>
        <dbReference type="ChEBI" id="CHEBI:15361"/>
        <dbReference type="ChEBI" id="CHEBI:57978"/>
        <dbReference type="ChEBI" id="CHEBI:58098"/>
        <dbReference type="EC" id="4.1.2.20"/>
    </reaction>
</comment>
<comment type="cofactor">
    <cofactor evidence="1">
        <name>Mg(2+)</name>
        <dbReference type="ChEBI" id="CHEBI:18420"/>
    </cofactor>
    <text evidence="1">Binds 1 Mg(2+) ion per subunit.</text>
</comment>
<comment type="pathway">
    <text evidence="1">Carbohydrate acid metabolism; galactarate degradation; D-glycerate from galactarate: step 2/3.</text>
</comment>
<comment type="subunit">
    <text evidence="1">Homohexamer; trimer of dimers.</text>
</comment>
<comment type="similarity">
    <text evidence="1">Belongs to the HpcH/HpaI aldolase family. KDGluc aldolase subfamily.</text>
</comment>
<accession>B7M032</accession>
<proteinExistence type="inferred from homology"/>